<comment type="function">
    <text evidence="2">Mitochondrial GTPase that catalyzes the GTP-dependent ribosomal translocation step during translation elongation. During this step, the ribosome changes from the pre-translocational (PRE) to the post-translocational (POST) state as the newly formed A-site-bound peptidyl-tRNA and P-site-bound deacylated tRNA move to the P and E sites, respectively. Catalyzes the coordinated movement of the two tRNA molecules, the mRNA and conformational changes in the ribosome. Does not mediate the disassembly of ribosomes from messenger RNA at the termination of mitochondrial protein biosynthesis.</text>
</comment>
<comment type="catalytic activity">
    <reaction evidence="1">
        <text>GTP + H2O = GDP + phosphate + H(+)</text>
        <dbReference type="Rhea" id="RHEA:19669"/>
        <dbReference type="ChEBI" id="CHEBI:15377"/>
        <dbReference type="ChEBI" id="CHEBI:15378"/>
        <dbReference type="ChEBI" id="CHEBI:37565"/>
        <dbReference type="ChEBI" id="CHEBI:43474"/>
        <dbReference type="ChEBI" id="CHEBI:58189"/>
    </reaction>
    <physiologicalReaction direction="left-to-right" evidence="1">
        <dbReference type="Rhea" id="RHEA:19670"/>
    </physiologicalReaction>
</comment>
<comment type="pathway">
    <text evidence="2">Protein biosynthesis; polypeptide chain elongation.</text>
</comment>
<comment type="subcellular location">
    <subcellularLocation>
        <location>Mitochondrion</location>
    </subcellularLocation>
</comment>
<comment type="similarity">
    <text evidence="3">Belongs to the TRAFAC class translation factor GTPase superfamily. Classic translation factor GTPase family. EF-G/EF-2 subfamily.</text>
</comment>
<gene>
    <name type="primary">Gfm1</name>
    <name type="synonym">Efg</name>
    <name type="synonym">Efg1</name>
    <name type="synonym">Gfm</name>
</gene>
<evidence type="ECO:0000250" key="1">
    <source>
        <dbReference type="UniProtKB" id="Q96RP9"/>
    </source>
</evidence>
<evidence type="ECO:0000255" key="2">
    <source>
        <dbReference type="HAMAP-Rule" id="MF_03061"/>
    </source>
</evidence>
<evidence type="ECO:0000305" key="3"/>
<dbReference type="EC" id="3.6.5.-" evidence="1"/>
<dbReference type="EMBL" id="AF315511">
    <property type="protein sequence ID" value="AAK58878.1"/>
    <property type="molecule type" value="mRNA"/>
</dbReference>
<dbReference type="EMBL" id="BC013093">
    <property type="protein sequence ID" value="AAH13093.1"/>
    <property type="molecule type" value="mRNA"/>
</dbReference>
<dbReference type="EMBL" id="BC031772">
    <property type="protein sequence ID" value="AAH31772.1"/>
    <property type="molecule type" value="mRNA"/>
</dbReference>
<dbReference type="CCDS" id="CCDS38449.1"/>
<dbReference type="RefSeq" id="NP_613057.2">
    <property type="nucleotide sequence ID" value="NM_138591.2"/>
</dbReference>
<dbReference type="SMR" id="Q8K0D5"/>
<dbReference type="BioGRID" id="205725">
    <property type="interactions" value="8"/>
</dbReference>
<dbReference type="FunCoup" id="Q8K0D5">
    <property type="interactions" value="2809"/>
</dbReference>
<dbReference type="IntAct" id="Q8K0D5">
    <property type="interactions" value="1"/>
</dbReference>
<dbReference type="STRING" id="10090.ENSMUSP00000076503"/>
<dbReference type="iPTMnet" id="Q8K0D5"/>
<dbReference type="PhosphoSitePlus" id="Q8K0D5"/>
<dbReference type="SwissPalm" id="Q8K0D5"/>
<dbReference type="jPOST" id="Q8K0D5"/>
<dbReference type="PaxDb" id="10090-ENSMUSP00000076503"/>
<dbReference type="PeptideAtlas" id="Q8K0D5"/>
<dbReference type="ProteomicsDB" id="277799"/>
<dbReference type="Pumba" id="Q8K0D5"/>
<dbReference type="Antibodypedia" id="46773">
    <property type="antibodies" value="189 antibodies from 29 providers"/>
</dbReference>
<dbReference type="Ensembl" id="ENSMUST00000077271.9">
    <property type="protein sequence ID" value="ENSMUSP00000076503.7"/>
    <property type="gene ID" value="ENSMUSG00000027774.17"/>
</dbReference>
<dbReference type="GeneID" id="28030"/>
<dbReference type="KEGG" id="mmu:28030"/>
<dbReference type="UCSC" id="uc008plm.2">
    <property type="organism name" value="mouse"/>
</dbReference>
<dbReference type="AGR" id="MGI:107339"/>
<dbReference type="CTD" id="85476"/>
<dbReference type="MGI" id="MGI:107339">
    <property type="gene designation" value="Gfm1"/>
</dbReference>
<dbReference type="VEuPathDB" id="HostDB:ENSMUSG00000027774"/>
<dbReference type="eggNOG" id="KOG0465">
    <property type="taxonomic scope" value="Eukaryota"/>
</dbReference>
<dbReference type="GeneTree" id="ENSGT00550000074911"/>
<dbReference type="HOGENOM" id="CLU_002794_4_1_1"/>
<dbReference type="InParanoid" id="Q8K0D5"/>
<dbReference type="OMA" id="GQFAKVQ"/>
<dbReference type="OrthoDB" id="198619at2759"/>
<dbReference type="PhylomeDB" id="Q8K0D5"/>
<dbReference type="TreeFam" id="TF105631"/>
<dbReference type="Reactome" id="R-MMU-5389840">
    <property type="pathway name" value="Mitochondrial translation elongation"/>
</dbReference>
<dbReference type="UniPathway" id="UPA00345"/>
<dbReference type="BioGRID-ORCS" id="28030">
    <property type="hits" value="22 hits in 78 CRISPR screens"/>
</dbReference>
<dbReference type="ChiTaRS" id="Gfm1">
    <property type="organism name" value="mouse"/>
</dbReference>
<dbReference type="PRO" id="PR:Q8K0D5"/>
<dbReference type="Proteomes" id="UP000000589">
    <property type="component" value="Chromosome 3"/>
</dbReference>
<dbReference type="RNAct" id="Q8K0D5">
    <property type="molecule type" value="protein"/>
</dbReference>
<dbReference type="Bgee" id="ENSMUSG00000027774">
    <property type="expression patterns" value="Expressed in myocardium of ventricle and 265 other cell types or tissues"/>
</dbReference>
<dbReference type="GO" id="GO:0005739">
    <property type="term" value="C:mitochondrion"/>
    <property type="evidence" value="ECO:0007005"/>
    <property type="project" value="MGI"/>
</dbReference>
<dbReference type="GO" id="GO:0005525">
    <property type="term" value="F:GTP binding"/>
    <property type="evidence" value="ECO:0007669"/>
    <property type="project" value="UniProtKB-UniRule"/>
</dbReference>
<dbReference type="GO" id="GO:0003924">
    <property type="term" value="F:GTPase activity"/>
    <property type="evidence" value="ECO:0000250"/>
    <property type="project" value="UniProtKB"/>
</dbReference>
<dbReference type="GO" id="GO:0003746">
    <property type="term" value="F:translation elongation factor activity"/>
    <property type="evidence" value="ECO:0000250"/>
    <property type="project" value="UniProtKB"/>
</dbReference>
<dbReference type="GO" id="GO:0070125">
    <property type="term" value="P:mitochondrial translational elongation"/>
    <property type="evidence" value="ECO:0000250"/>
    <property type="project" value="UniProtKB"/>
</dbReference>
<dbReference type="CDD" id="cd01886">
    <property type="entry name" value="EF-G"/>
    <property type="match status" value="1"/>
</dbReference>
<dbReference type="CDD" id="cd16262">
    <property type="entry name" value="EFG_III"/>
    <property type="match status" value="1"/>
</dbReference>
<dbReference type="CDD" id="cd01434">
    <property type="entry name" value="EFG_mtEFG1_IV"/>
    <property type="match status" value="1"/>
</dbReference>
<dbReference type="CDD" id="cd04097">
    <property type="entry name" value="mtEFG1_C"/>
    <property type="match status" value="1"/>
</dbReference>
<dbReference type="CDD" id="cd04091">
    <property type="entry name" value="mtEFG1_II_like"/>
    <property type="match status" value="1"/>
</dbReference>
<dbReference type="FunFam" id="3.30.230.10:FF:000003">
    <property type="entry name" value="Elongation factor G"/>
    <property type="match status" value="1"/>
</dbReference>
<dbReference type="FunFam" id="3.30.70.240:FF:000001">
    <property type="entry name" value="Elongation factor G"/>
    <property type="match status" value="1"/>
</dbReference>
<dbReference type="FunFam" id="2.40.30.10:FF:000022">
    <property type="entry name" value="Elongation factor G, mitochondrial"/>
    <property type="match status" value="1"/>
</dbReference>
<dbReference type="FunFam" id="3.30.70.870:FF:000008">
    <property type="entry name" value="Elongation factor G, mitochondrial"/>
    <property type="match status" value="1"/>
</dbReference>
<dbReference type="FunFam" id="3.40.50.300:FF:000539">
    <property type="entry name" value="Elongation factor G, mitochondrial"/>
    <property type="match status" value="1"/>
</dbReference>
<dbReference type="Gene3D" id="3.30.230.10">
    <property type="match status" value="1"/>
</dbReference>
<dbReference type="Gene3D" id="3.30.70.240">
    <property type="match status" value="1"/>
</dbReference>
<dbReference type="Gene3D" id="3.30.70.870">
    <property type="entry name" value="Elongation Factor G (Translational Gtpase), domain 3"/>
    <property type="match status" value="1"/>
</dbReference>
<dbReference type="Gene3D" id="3.40.50.300">
    <property type="entry name" value="P-loop containing nucleotide triphosphate hydrolases"/>
    <property type="match status" value="1"/>
</dbReference>
<dbReference type="Gene3D" id="2.40.30.10">
    <property type="entry name" value="Translation factors"/>
    <property type="match status" value="1"/>
</dbReference>
<dbReference type="HAMAP" id="MF_00054_B">
    <property type="entry name" value="EF_G_EF_2_B"/>
    <property type="match status" value="1"/>
</dbReference>
<dbReference type="InterPro" id="IPR041095">
    <property type="entry name" value="EFG_II"/>
</dbReference>
<dbReference type="InterPro" id="IPR009022">
    <property type="entry name" value="EFG_III"/>
</dbReference>
<dbReference type="InterPro" id="IPR035647">
    <property type="entry name" value="EFG_III/V"/>
</dbReference>
<dbReference type="InterPro" id="IPR047872">
    <property type="entry name" value="EFG_IV"/>
</dbReference>
<dbReference type="InterPro" id="IPR035649">
    <property type="entry name" value="EFG_V"/>
</dbReference>
<dbReference type="InterPro" id="IPR000640">
    <property type="entry name" value="EFG_V-like"/>
</dbReference>
<dbReference type="InterPro" id="IPR004161">
    <property type="entry name" value="EFTu-like_2"/>
</dbReference>
<dbReference type="InterPro" id="IPR031157">
    <property type="entry name" value="G_TR_CS"/>
</dbReference>
<dbReference type="InterPro" id="IPR027417">
    <property type="entry name" value="P-loop_NTPase"/>
</dbReference>
<dbReference type="InterPro" id="IPR020568">
    <property type="entry name" value="Ribosomal_Su5_D2-typ_SF"/>
</dbReference>
<dbReference type="InterPro" id="IPR014721">
    <property type="entry name" value="Ribsml_uS5_D2-typ_fold_subgr"/>
</dbReference>
<dbReference type="InterPro" id="IPR005225">
    <property type="entry name" value="Small_GTP-bd"/>
</dbReference>
<dbReference type="InterPro" id="IPR000795">
    <property type="entry name" value="T_Tr_GTP-bd_dom"/>
</dbReference>
<dbReference type="InterPro" id="IPR009000">
    <property type="entry name" value="Transl_B-barrel_sf"/>
</dbReference>
<dbReference type="InterPro" id="IPR004540">
    <property type="entry name" value="Transl_elong_EFG/EF2"/>
</dbReference>
<dbReference type="InterPro" id="IPR005517">
    <property type="entry name" value="Transl_elong_EFG/EF2_IV"/>
</dbReference>
<dbReference type="NCBIfam" id="TIGR00484">
    <property type="entry name" value="EF-G"/>
    <property type="match status" value="1"/>
</dbReference>
<dbReference type="NCBIfam" id="NF009381">
    <property type="entry name" value="PRK12740.1-5"/>
    <property type="match status" value="1"/>
</dbReference>
<dbReference type="NCBIfam" id="TIGR00231">
    <property type="entry name" value="small_GTP"/>
    <property type="match status" value="1"/>
</dbReference>
<dbReference type="PANTHER" id="PTHR43636">
    <property type="entry name" value="ELONGATION FACTOR G, MITOCHONDRIAL"/>
    <property type="match status" value="1"/>
</dbReference>
<dbReference type="PANTHER" id="PTHR43636:SF2">
    <property type="entry name" value="ELONGATION FACTOR G, MITOCHONDRIAL"/>
    <property type="match status" value="1"/>
</dbReference>
<dbReference type="Pfam" id="PF00679">
    <property type="entry name" value="EFG_C"/>
    <property type="match status" value="1"/>
</dbReference>
<dbReference type="Pfam" id="PF14492">
    <property type="entry name" value="EFG_III"/>
    <property type="match status" value="1"/>
</dbReference>
<dbReference type="Pfam" id="PF03764">
    <property type="entry name" value="EFG_IV"/>
    <property type="match status" value="1"/>
</dbReference>
<dbReference type="Pfam" id="PF00009">
    <property type="entry name" value="GTP_EFTU"/>
    <property type="match status" value="1"/>
</dbReference>
<dbReference type="Pfam" id="PF03144">
    <property type="entry name" value="GTP_EFTU_D2"/>
    <property type="match status" value="1"/>
</dbReference>
<dbReference type="PRINTS" id="PR00315">
    <property type="entry name" value="ELONGATNFCT"/>
</dbReference>
<dbReference type="SMART" id="SM00838">
    <property type="entry name" value="EFG_C"/>
    <property type="match status" value="1"/>
</dbReference>
<dbReference type="SMART" id="SM00889">
    <property type="entry name" value="EFG_IV"/>
    <property type="match status" value="1"/>
</dbReference>
<dbReference type="SUPFAM" id="SSF54980">
    <property type="entry name" value="EF-G C-terminal domain-like"/>
    <property type="match status" value="2"/>
</dbReference>
<dbReference type="SUPFAM" id="SSF52540">
    <property type="entry name" value="P-loop containing nucleoside triphosphate hydrolases"/>
    <property type="match status" value="1"/>
</dbReference>
<dbReference type="SUPFAM" id="SSF54211">
    <property type="entry name" value="Ribosomal protein S5 domain 2-like"/>
    <property type="match status" value="1"/>
</dbReference>
<dbReference type="SUPFAM" id="SSF50447">
    <property type="entry name" value="Translation proteins"/>
    <property type="match status" value="1"/>
</dbReference>
<dbReference type="PROSITE" id="PS00301">
    <property type="entry name" value="G_TR_1"/>
    <property type="match status" value="1"/>
</dbReference>
<dbReference type="PROSITE" id="PS51722">
    <property type="entry name" value="G_TR_2"/>
    <property type="match status" value="1"/>
</dbReference>
<sequence length="751" mass="83550">MRLLRVAAALGRGPFPRVPAVLGWQGKQADWKTRRWCSSGPVPNEKIRNIGISAHIDSGKTTLTERVLYYTGRIATMHEVKGKDGVGAVMDSMELERQRGITIQSAATYTMWKDININIIDTPGHVDFTIEVERALRVLDGAVLVLCAVGGVQCQTMTVSRQMKRYNVPFLTFINKLDRMGSNPSRALQQMRSKLNHNAAFVQIPIGLEGDFKGIIDLIEERAIYFDGDFGQIVRYDEIPAGLRAAAADHRQELIECVANSDEQLGELFLEEKIPSVSDLKRAIRRATLSRSFTPVFLGSALKNKGVQPLLDAVLEYLPNPSEVQNYAILNQNDSKEKTKILMNPQRDDSHPFVGLAFKLEAGRFGQLTYVRNYQGELKKGSTIYNTRTGKKVRVQRLVRMHADMMEDVEEVYAGDICALFGIDCASGDTFTNKDNSDLSMESIHVPEPVISIAMRPSNKNDLEKFSKGIGRFTREDPTFKVHFDPESKETIVSGMGELHLEIYAQRMEREYGCPCITGKPKVAFRETIVAPVPFDFTHKKQSGGAGQFGKVIGVLEPLPPEDYTKLEFSDETFGSNVPKQFVPAVEKGFLDACEKGPLSGHKLSGLRFVLQDGAHHMVDSNEISFIRAGEGALKQALANGTLCIIEPIMSVEVIAPNEFQGTVFAGINRRHGVITGQDGIEDYFTLYADVPLNNMFGYSTELRSCTEGKGEYTMEYCRYQPCSPSTQEELINKYLEATGQLPVKKGKAKN</sequence>
<reference key="1">
    <citation type="journal article" date="2001" name="Genomics">
        <title>Cloning and characterization of human and mouse mitochondrial elongation factor G, GFM and gfm, and mapping of GFM to human chromosome 3q25.1-q26.2.</title>
        <authorList>
            <person name="Gao J."/>
            <person name="Yu L."/>
            <person name="Zhang P."/>
            <person name="Jiang J."/>
            <person name="Chen J."/>
            <person name="Peng J."/>
            <person name="Wei Y."/>
            <person name="Zhao S."/>
        </authorList>
    </citation>
    <scope>NUCLEOTIDE SEQUENCE [MRNA]</scope>
</reference>
<reference key="2">
    <citation type="journal article" date="2004" name="Genome Res.">
        <title>The status, quality, and expansion of the NIH full-length cDNA project: the Mammalian Gene Collection (MGC).</title>
        <authorList>
            <consortium name="The MGC Project Team"/>
        </authorList>
    </citation>
    <scope>NUCLEOTIDE SEQUENCE [LARGE SCALE MRNA]</scope>
    <source>
        <strain>FVB/N</strain>
        <tissue>Kidney</tissue>
    </source>
</reference>
<reference key="3">
    <citation type="journal article" date="2010" name="Cell">
        <title>A tissue-specific atlas of mouse protein phosphorylation and expression.</title>
        <authorList>
            <person name="Huttlin E.L."/>
            <person name="Jedrychowski M.P."/>
            <person name="Elias J.E."/>
            <person name="Goswami T."/>
            <person name="Rad R."/>
            <person name="Beausoleil S.A."/>
            <person name="Villen J."/>
            <person name="Haas W."/>
            <person name="Sowa M.E."/>
            <person name="Gygi S.P."/>
        </authorList>
    </citation>
    <scope>IDENTIFICATION BY MASS SPECTROMETRY [LARGE SCALE ANALYSIS]</scope>
    <source>
        <tissue>Brain</tissue>
        <tissue>Brown adipose tissue</tissue>
        <tissue>Heart</tissue>
        <tissue>Kidney</tissue>
        <tissue>Liver</tissue>
        <tissue>Lung</tissue>
        <tissue>Pancreas</tissue>
        <tissue>Spleen</tissue>
        <tissue>Testis</tissue>
    </source>
</reference>
<protein>
    <recommendedName>
        <fullName evidence="2">Elongation factor G, mitochondrial</fullName>
        <shortName evidence="2">EF-Gmt</shortName>
        <ecNumber evidence="1">3.6.5.-</ecNumber>
    </recommendedName>
    <alternativeName>
        <fullName evidence="2">Elongation factor G 1, mitochondrial</fullName>
        <shortName evidence="2">mEF-G 1</shortName>
    </alternativeName>
    <alternativeName>
        <fullName evidence="2">Elongation factor G1</fullName>
    </alternativeName>
</protein>
<feature type="transit peptide" description="Mitochondrion" evidence="2">
    <location>
        <begin position="1"/>
        <end position="37"/>
    </location>
</feature>
<feature type="chain" id="PRO_0000007441" description="Elongation factor G, mitochondrial">
    <location>
        <begin position="38"/>
        <end position="751"/>
    </location>
</feature>
<feature type="domain" description="tr-type G">
    <location>
        <begin position="45"/>
        <end position="322"/>
    </location>
</feature>
<feature type="binding site" evidence="2">
    <location>
        <begin position="54"/>
        <end position="61"/>
    </location>
    <ligand>
        <name>GTP</name>
        <dbReference type="ChEBI" id="CHEBI:37565"/>
    </ligand>
</feature>
<feature type="binding site" evidence="2">
    <location>
        <begin position="121"/>
        <end position="125"/>
    </location>
    <ligand>
        <name>GTP</name>
        <dbReference type="ChEBI" id="CHEBI:37565"/>
    </ligand>
</feature>
<feature type="binding site" evidence="2">
    <location>
        <begin position="175"/>
        <end position="178"/>
    </location>
    <ligand>
        <name>GTP</name>
        <dbReference type="ChEBI" id="CHEBI:37565"/>
    </ligand>
</feature>
<feature type="modified residue" description="Phosphoserine" evidence="1">
    <location>
        <position position="92"/>
    </location>
</feature>
<feature type="modified residue" description="N6-acetyllysine" evidence="1">
    <location>
        <position position="176"/>
    </location>
</feature>
<feature type="sequence conflict" description="In Ref. 1; AAK58878." evidence="3" ref="1">
    <original>I</original>
    <variation>M</variation>
    <location>
        <position position="120"/>
    </location>
</feature>
<feature type="sequence conflict" description="In Ref. 1; AAK58878." evidence="3" ref="1">
    <original>G</original>
    <variation>R</variation>
    <location>
        <position position="151"/>
    </location>
</feature>
<feature type="sequence conflict" description="In Ref. 1; AAK58878." evidence="3" ref="1">
    <original>K</original>
    <variation>E</variation>
    <location>
        <position position="281"/>
    </location>
</feature>
<feature type="sequence conflict" description="In Ref. 2; AAH13093." evidence="3" ref="2">
    <original>P</original>
    <variation>S</variation>
    <location>
        <position position="515"/>
    </location>
</feature>
<accession>Q8K0D5</accession>
<accession>Q921D6</accession>
<accession>Q924I0</accession>
<organism>
    <name type="scientific">Mus musculus</name>
    <name type="common">Mouse</name>
    <dbReference type="NCBI Taxonomy" id="10090"/>
    <lineage>
        <taxon>Eukaryota</taxon>
        <taxon>Metazoa</taxon>
        <taxon>Chordata</taxon>
        <taxon>Craniata</taxon>
        <taxon>Vertebrata</taxon>
        <taxon>Euteleostomi</taxon>
        <taxon>Mammalia</taxon>
        <taxon>Eutheria</taxon>
        <taxon>Euarchontoglires</taxon>
        <taxon>Glires</taxon>
        <taxon>Rodentia</taxon>
        <taxon>Myomorpha</taxon>
        <taxon>Muroidea</taxon>
        <taxon>Muridae</taxon>
        <taxon>Murinae</taxon>
        <taxon>Mus</taxon>
        <taxon>Mus</taxon>
    </lineage>
</organism>
<proteinExistence type="evidence at protein level"/>
<keyword id="KW-0007">Acetylation</keyword>
<keyword id="KW-0251">Elongation factor</keyword>
<keyword id="KW-0342">GTP-binding</keyword>
<keyword id="KW-0378">Hydrolase</keyword>
<keyword id="KW-0496">Mitochondrion</keyword>
<keyword id="KW-0547">Nucleotide-binding</keyword>
<keyword id="KW-0597">Phosphoprotein</keyword>
<keyword id="KW-0648">Protein biosynthesis</keyword>
<keyword id="KW-1185">Reference proteome</keyword>
<keyword id="KW-0809">Transit peptide</keyword>
<name>EFGM_MOUSE</name>